<protein>
    <recommendedName>
        <fullName evidence="1">Protein translocase subunit SecA</fullName>
        <ecNumber evidence="1">7.4.2.8</ecNumber>
    </recommendedName>
</protein>
<keyword id="KW-0067">ATP-binding</keyword>
<keyword id="KW-0997">Cell inner membrane</keyword>
<keyword id="KW-1003">Cell membrane</keyword>
<keyword id="KW-0963">Cytoplasm</keyword>
<keyword id="KW-0472">Membrane</keyword>
<keyword id="KW-0479">Metal-binding</keyword>
<keyword id="KW-0547">Nucleotide-binding</keyword>
<keyword id="KW-0653">Protein transport</keyword>
<keyword id="KW-1278">Translocase</keyword>
<keyword id="KW-0811">Translocation</keyword>
<keyword id="KW-0813">Transport</keyword>
<keyword id="KW-0862">Zinc</keyword>
<reference key="1">
    <citation type="submission" date="2007-03" db="EMBL/GenBank/DDBJ databases">
        <authorList>
            <person name="Heidelberg J."/>
        </authorList>
    </citation>
    <scope>NUCLEOTIDE SEQUENCE [LARGE SCALE GENOMIC DNA]</scope>
    <source>
        <strain>ATCC 39541 / Classical Ogawa 395 / O395</strain>
    </source>
</reference>
<reference key="2">
    <citation type="journal article" date="2008" name="PLoS ONE">
        <title>A recalibrated molecular clock and independent origins for the cholera pandemic clones.</title>
        <authorList>
            <person name="Feng L."/>
            <person name="Reeves P.R."/>
            <person name="Lan R."/>
            <person name="Ren Y."/>
            <person name="Gao C."/>
            <person name="Zhou Z."/>
            <person name="Ren Y."/>
            <person name="Cheng J."/>
            <person name="Wang W."/>
            <person name="Wang J."/>
            <person name="Qian W."/>
            <person name="Li D."/>
            <person name="Wang L."/>
        </authorList>
    </citation>
    <scope>NUCLEOTIDE SEQUENCE [LARGE SCALE GENOMIC DNA]</scope>
    <source>
        <strain>ATCC 39541 / Classical Ogawa 395 / O395</strain>
    </source>
</reference>
<accession>A5F5P1</accession>
<accession>C3M4B6</accession>
<name>SECA_VIBC3</name>
<gene>
    <name evidence="1" type="primary">secA</name>
    <name type="ordered locus">VC0395_A1972</name>
    <name type="ordered locus">VC395_2509</name>
</gene>
<dbReference type="EC" id="7.4.2.8" evidence="1"/>
<dbReference type="EMBL" id="CP000627">
    <property type="protein sequence ID" value="ABQ19668.1"/>
    <property type="molecule type" value="Genomic_DNA"/>
</dbReference>
<dbReference type="EMBL" id="CP001235">
    <property type="protein sequence ID" value="ACP10498.1"/>
    <property type="molecule type" value="Genomic_DNA"/>
</dbReference>
<dbReference type="RefSeq" id="WP_000628943.1">
    <property type="nucleotide sequence ID" value="NZ_JAACZH010000010.1"/>
</dbReference>
<dbReference type="SMR" id="A5F5P1"/>
<dbReference type="KEGG" id="vco:VC0395_A1972"/>
<dbReference type="KEGG" id="vcr:VC395_2509"/>
<dbReference type="PATRIC" id="fig|345073.21.peg.2413"/>
<dbReference type="eggNOG" id="COG0653">
    <property type="taxonomic scope" value="Bacteria"/>
</dbReference>
<dbReference type="HOGENOM" id="CLU_005314_3_0_6"/>
<dbReference type="OrthoDB" id="9805579at2"/>
<dbReference type="Proteomes" id="UP000000249">
    <property type="component" value="Chromosome 2"/>
</dbReference>
<dbReference type="GO" id="GO:0031522">
    <property type="term" value="C:cell envelope Sec protein transport complex"/>
    <property type="evidence" value="ECO:0007669"/>
    <property type="project" value="TreeGrafter"/>
</dbReference>
<dbReference type="GO" id="GO:0005829">
    <property type="term" value="C:cytosol"/>
    <property type="evidence" value="ECO:0007669"/>
    <property type="project" value="TreeGrafter"/>
</dbReference>
<dbReference type="GO" id="GO:0005886">
    <property type="term" value="C:plasma membrane"/>
    <property type="evidence" value="ECO:0007669"/>
    <property type="project" value="UniProtKB-SubCell"/>
</dbReference>
<dbReference type="GO" id="GO:0005524">
    <property type="term" value="F:ATP binding"/>
    <property type="evidence" value="ECO:0007669"/>
    <property type="project" value="UniProtKB-UniRule"/>
</dbReference>
<dbReference type="GO" id="GO:0046872">
    <property type="term" value="F:metal ion binding"/>
    <property type="evidence" value="ECO:0007669"/>
    <property type="project" value="UniProtKB-KW"/>
</dbReference>
<dbReference type="GO" id="GO:0008564">
    <property type="term" value="F:protein-exporting ATPase activity"/>
    <property type="evidence" value="ECO:0007669"/>
    <property type="project" value="UniProtKB-EC"/>
</dbReference>
<dbReference type="GO" id="GO:0065002">
    <property type="term" value="P:intracellular protein transmembrane transport"/>
    <property type="evidence" value="ECO:0007669"/>
    <property type="project" value="UniProtKB-UniRule"/>
</dbReference>
<dbReference type="GO" id="GO:0017038">
    <property type="term" value="P:protein import"/>
    <property type="evidence" value="ECO:0007669"/>
    <property type="project" value="InterPro"/>
</dbReference>
<dbReference type="GO" id="GO:0006605">
    <property type="term" value="P:protein targeting"/>
    <property type="evidence" value="ECO:0007669"/>
    <property type="project" value="UniProtKB-UniRule"/>
</dbReference>
<dbReference type="GO" id="GO:0043952">
    <property type="term" value="P:protein transport by the Sec complex"/>
    <property type="evidence" value="ECO:0007669"/>
    <property type="project" value="TreeGrafter"/>
</dbReference>
<dbReference type="CDD" id="cd17928">
    <property type="entry name" value="DEXDc_SecA"/>
    <property type="match status" value="1"/>
</dbReference>
<dbReference type="CDD" id="cd18803">
    <property type="entry name" value="SF2_C_secA"/>
    <property type="match status" value="1"/>
</dbReference>
<dbReference type="FunFam" id="1.10.3060.10:FF:000001">
    <property type="entry name" value="Preprotein translocase subunit SecA"/>
    <property type="match status" value="1"/>
</dbReference>
<dbReference type="FunFam" id="3.40.50.300:FF:000081">
    <property type="entry name" value="Preprotein translocase subunit SecA"/>
    <property type="match status" value="1"/>
</dbReference>
<dbReference type="FunFam" id="3.40.50.300:FF:000113">
    <property type="entry name" value="Preprotein translocase subunit SecA"/>
    <property type="match status" value="1"/>
</dbReference>
<dbReference type="FunFam" id="3.90.1440.10:FF:000001">
    <property type="entry name" value="Preprotein translocase subunit SecA"/>
    <property type="match status" value="1"/>
</dbReference>
<dbReference type="Gene3D" id="1.10.3060.10">
    <property type="entry name" value="Helical scaffold and wing domains of SecA"/>
    <property type="match status" value="1"/>
</dbReference>
<dbReference type="Gene3D" id="3.40.50.300">
    <property type="entry name" value="P-loop containing nucleotide triphosphate hydrolases"/>
    <property type="match status" value="2"/>
</dbReference>
<dbReference type="Gene3D" id="3.90.1440.10">
    <property type="entry name" value="SecA, preprotein cross-linking domain"/>
    <property type="match status" value="1"/>
</dbReference>
<dbReference type="HAMAP" id="MF_01382">
    <property type="entry name" value="SecA"/>
    <property type="match status" value="1"/>
</dbReference>
<dbReference type="InterPro" id="IPR014001">
    <property type="entry name" value="Helicase_ATP-bd"/>
</dbReference>
<dbReference type="InterPro" id="IPR001650">
    <property type="entry name" value="Helicase_C-like"/>
</dbReference>
<dbReference type="InterPro" id="IPR027417">
    <property type="entry name" value="P-loop_NTPase"/>
</dbReference>
<dbReference type="InterPro" id="IPR004027">
    <property type="entry name" value="SEC_C_motif"/>
</dbReference>
<dbReference type="InterPro" id="IPR000185">
    <property type="entry name" value="SecA"/>
</dbReference>
<dbReference type="InterPro" id="IPR020937">
    <property type="entry name" value="SecA_CS"/>
</dbReference>
<dbReference type="InterPro" id="IPR011115">
    <property type="entry name" value="SecA_DEAD"/>
</dbReference>
<dbReference type="InterPro" id="IPR014018">
    <property type="entry name" value="SecA_motor_DEAD"/>
</dbReference>
<dbReference type="InterPro" id="IPR011130">
    <property type="entry name" value="SecA_preprotein_X-link_dom"/>
</dbReference>
<dbReference type="InterPro" id="IPR044722">
    <property type="entry name" value="SecA_SF2_C"/>
</dbReference>
<dbReference type="InterPro" id="IPR011116">
    <property type="entry name" value="SecA_Wing/Scaffold"/>
</dbReference>
<dbReference type="InterPro" id="IPR036266">
    <property type="entry name" value="SecA_Wing/Scaffold_sf"/>
</dbReference>
<dbReference type="InterPro" id="IPR036670">
    <property type="entry name" value="SecA_X-link_sf"/>
</dbReference>
<dbReference type="NCBIfam" id="NF009538">
    <property type="entry name" value="PRK12904.1"/>
    <property type="match status" value="1"/>
</dbReference>
<dbReference type="NCBIfam" id="TIGR00963">
    <property type="entry name" value="secA"/>
    <property type="match status" value="1"/>
</dbReference>
<dbReference type="PANTHER" id="PTHR30612:SF0">
    <property type="entry name" value="CHLOROPLAST PROTEIN-TRANSPORTING ATPASE"/>
    <property type="match status" value="1"/>
</dbReference>
<dbReference type="PANTHER" id="PTHR30612">
    <property type="entry name" value="SECA INNER MEMBRANE COMPONENT OF SEC PROTEIN SECRETION SYSTEM"/>
    <property type="match status" value="1"/>
</dbReference>
<dbReference type="Pfam" id="PF21090">
    <property type="entry name" value="P-loop_SecA"/>
    <property type="match status" value="1"/>
</dbReference>
<dbReference type="Pfam" id="PF02810">
    <property type="entry name" value="SEC-C"/>
    <property type="match status" value="1"/>
</dbReference>
<dbReference type="Pfam" id="PF07517">
    <property type="entry name" value="SecA_DEAD"/>
    <property type="match status" value="1"/>
</dbReference>
<dbReference type="Pfam" id="PF01043">
    <property type="entry name" value="SecA_PP_bind"/>
    <property type="match status" value="1"/>
</dbReference>
<dbReference type="Pfam" id="PF07516">
    <property type="entry name" value="SecA_SW"/>
    <property type="match status" value="1"/>
</dbReference>
<dbReference type="PRINTS" id="PR00906">
    <property type="entry name" value="SECA"/>
</dbReference>
<dbReference type="SMART" id="SM00957">
    <property type="entry name" value="SecA_DEAD"/>
    <property type="match status" value="1"/>
</dbReference>
<dbReference type="SMART" id="SM00958">
    <property type="entry name" value="SecA_PP_bind"/>
    <property type="match status" value="1"/>
</dbReference>
<dbReference type="SUPFAM" id="SSF81886">
    <property type="entry name" value="Helical scaffold and wing domains of SecA"/>
    <property type="match status" value="1"/>
</dbReference>
<dbReference type="SUPFAM" id="SSF52540">
    <property type="entry name" value="P-loop containing nucleoside triphosphate hydrolases"/>
    <property type="match status" value="2"/>
</dbReference>
<dbReference type="SUPFAM" id="SSF81767">
    <property type="entry name" value="Pre-protein crosslinking domain of SecA"/>
    <property type="match status" value="1"/>
</dbReference>
<dbReference type="PROSITE" id="PS01312">
    <property type="entry name" value="SECA"/>
    <property type="match status" value="1"/>
</dbReference>
<dbReference type="PROSITE" id="PS51196">
    <property type="entry name" value="SECA_MOTOR_DEAD"/>
    <property type="match status" value="1"/>
</dbReference>
<feature type="chain" id="PRO_1000087335" description="Protein translocase subunit SecA">
    <location>
        <begin position="1"/>
        <end position="903"/>
    </location>
</feature>
<feature type="region of interest" description="Disordered" evidence="2">
    <location>
        <begin position="840"/>
        <end position="903"/>
    </location>
</feature>
<feature type="compositionally biased region" description="Basic and acidic residues" evidence="2">
    <location>
        <begin position="840"/>
        <end position="853"/>
    </location>
</feature>
<feature type="binding site" evidence="1">
    <location>
        <position position="87"/>
    </location>
    <ligand>
        <name>ATP</name>
        <dbReference type="ChEBI" id="CHEBI:30616"/>
    </ligand>
</feature>
<feature type="binding site" evidence="1">
    <location>
        <begin position="105"/>
        <end position="109"/>
    </location>
    <ligand>
        <name>ATP</name>
        <dbReference type="ChEBI" id="CHEBI:30616"/>
    </ligand>
</feature>
<feature type="binding site" evidence="1">
    <location>
        <position position="513"/>
    </location>
    <ligand>
        <name>ATP</name>
        <dbReference type="ChEBI" id="CHEBI:30616"/>
    </ligand>
</feature>
<feature type="binding site" evidence="1">
    <location>
        <position position="887"/>
    </location>
    <ligand>
        <name>Zn(2+)</name>
        <dbReference type="ChEBI" id="CHEBI:29105"/>
    </ligand>
</feature>
<feature type="binding site" evidence="1">
    <location>
        <position position="889"/>
    </location>
    <ligand>
        <name>Zn(2+)</name>
        <dbReference type="ChEBI" id="CHEBI:29105"/>
    </ligand>
</feature>
<feature type="binding site" evidence="1">
    <location>
        <position position="898"/>
    </location>
    <ligand>
        <name>Zn(2+)</name>
        <dbReference type="ChEBI" id="CHEBI:29105"/>
    </ligand>
</feature>
<feature type="binding site" evidence="1">
    <location>
        <position position="899"/>
    </location>
    <ligand>
        <name>Zn(2+)</name>
        <dbReference type="ChEBI" id="CHEBI:29105"/>
    </ligand>
</feature>
<sequence length="903" mass="102470">MITKLLTKVIGSRNDRTLRRLRKIVKEINNYEPAFEALSDEELKAKTVEFRQRIEQGENLDQLLPEAFATVREASKRVFGMRHFDVQLIGGMVLHGGQIAEMRTGEGKTLTATLAAYLNALPGKGVHIVTVNDYLAKRDAETNRPLFEFLGMTVGVNIPNMPQPAKKEAYQADILYGTNNEFGFDYLRDNMAFRPEDRVQRARFFAVVDEVDSILIDEARTPLIISGPAEDSSDLYIRINKLIPLLQKQDKEDSEEYRGDGHFTVDEKSKQVHLTETGQEFVEELLVKNGMMQEGDTLYSPANISLLHHVNAALRAHVLFEKNVDYIVTPDGEVVIVDEHTGRTMPGRRWSDGLHQAVEAKEGVKIQNENQTLASITFQNYFRLYEKLSGMTGTADTEAFEFQQIYGLETVVIPTNKPMVRNDMPDVVYRSEAEKFAAIIEDIKQRVEKGQPVLVGTVSIEKSELLSNALKKAGIKHNVLNAKFHEKEAEIVAEAGKPGAVTIATNMAGRGTDIVLGGSWQAKVEKLDNPTQEQIDAIKAEWKQVHDQVLQAGGLHIIGTERHESRRIDNQLRGRSGRQGDAGSSRFYLSMEDTLLRIFTSDRMAALIQSGMDEGEAIESKMLSRSIEKAQRKVEGRNFDIRKQLLEYDDVANDQRKVVYELRDELMSADDISDMIAQNREDVLNAVMDEYIPPQSLEDMWDIKGLEDRLKNDFDLPLPIQSWLDADNKLYEEALRERIIEQAVEVYKAKEQAVSPAVMRNFEKSVMLQTLDTLWKEHLAAMDHLRQGIHLRGYAQKNPKQEYKRESFELFEDLLESLKSDVITVLSKVRVQQQEEVERMEAQRRAQAEEAARHAQAQHASADDAEQDESNQPMVRDERKVGRNEPCPCGSGKKYKQCHGQIN</sequence>
<comment type="function">
    <text evidence="1">Part of the Sec protein translocase complex. Interacts with the SecYEG preprotein conducting channel. Has a central role in coupling the hydrolysis of ATP to the transfer of proteins into and across the cell membrane, serving both as a receptor for the preprotein-SecB complex and as an ATP-driven molecular motor driving the stepwise translocation of polypeptide chains across the membrane.</text>
</comment>
<comment type="catalytic activity">
    <reaction evidence="1">
        <text>ATP + H2O + cellular proteinSide 1 = ADP + phosphate + cellular proteinSide 2.</text>
        <dbReference type="EC" id="7.4.2.8"/>
    </reaction>
</comment>
<comment type="cofactor">
    <cofactor evidence="1">
        <name>Zn(2+)</name>
        <dbReference type="ChEBI" id="CHEBI:29105"/>
    </cofactor>
    <text evidence="1">May bind 1 zinc ion per subunit.</text>
</comment>
<comment type="subunit">
    <text evidence="1">Monomer and homodimer. Part of the essential Sec protein translocation apparatus which comprises SecA, SecYEG and auxiliary proteins SecDF-YajC and YidC.</text>
</comment>
<comment type="subcellular location">
    <subcellularLocation>
        <location evidence="1">Cell inner membrane</location>
        <topology evidence="1">Peripheral membrane protein</topology>
        <orientation evidence="1">Cytoplasmic side</orientation>
    </subcellularLocation>
    <subcellularLocation>
        <location evidence="1">Cytoplasm</location>
    </subcellularLocation>
    <text evidence="1">Distribution is 50-50.</text>
</comment>
<comment type="similarity">
    <text evidence="1">Belongs to the SecA family.</text>
</comment>
<proteinExistence type="inferred from homology"/>
<evidence type="ECO:0000255" key="1">
    <source>
        <dbReference type="HAMAP-Rule" id="MF_01382"/>
    </source>
</evidence>
<evidence type="ECO:0000256" key="2">
    <source>
        <dbReference type="SAM" id="MobiDB-lite"/>
    </source>
</evidence>
<organism>
    <name type="scientific">Vibrio cholerae serotype O1 (strain ATCC 39541 / Classical Ogawa 395 / O395)</name>
    <dbReference type="NCBI Taxonomy" id="345073"/>
    <lineage>
        <taxon>Bacteria</taxon>
        <taxon>Pseudomonadati</taxon>
        <taxon>Pseudomonadota</taxon>
        <taxon>Gammaproteobacteria</taxon>
        <taxon>Vibrionales</taxon>
        <taxon>Vibrionaceae</taxon>
        <taxon>Vibrio</taxon>
    </lineage>
</organism>